<feature type="chain" id="PRO_0000317267" description="EF-hand calcium-binding domain-containing protein 7">
    <location>
        <begin position="1"/>
        <end position="628"/>
    </location>
</feature>
<feature type="domain" description="EF-hand 1" evidence="2">
    <location>
        <begin position="102"/>
        <end position="137"/>
    </location>
</feature>
<feature type="domain" description="EF-hand 2" evidence="2">
    <location>
        <begin position="138"/>
        <end position="173"/>
    </location>
</feature>
<feature type="domain" description="EF-hand 3" evidence="2">
    <location>
        <begin position="402"/>
        <end position="437"/>
    </location>
</feature>
<feature type="region of interest" description="Disordered" evidence="3">
    <location>
        <begin position="1"/>
        <end position="24"/>
    </location>
</feature>
<feature type="region of interest" description="Disordered" evidence="3">
    <location>
        <begin position="192"/>
        <end position="231"/>
    </location>
</feature>
<feature type="compositionally biased region" description="Polar residues" evidence="3">
    <location>
        <begin position="1"/>
        <end position="22"/>
    </location>
</feature>
<feature type="compositionally biased region" description="Polar residues" evidence="3">
    <location>
        <begin position="222"/>
        <end position="231"/>
    </location>
</feature>
<feature type="binding site" evidence="2">
    <location>
        <position position="415"/>
    </location>
    <ligand>
        <name>Ca(2+)</name>
        <dbReference type="ChEBI" id="CHEBI:29108"/>
    </ligand>
</feature>
<feature type="binding site" evidence="2">
    <location>
        <position position="417"/>
    </location>
    <ligand>
        <name>Ca(2+)</name>
        <dbReference type="ChEBI" id="CHEBI:29108"/>
    </ligand>
</feature>
<feature type="binding site" evidence="2">
    <location>
        <position position="419"/>
    </location>
    <ligand>
        <name>Ca(2+)</name>
        <dbReference type="ChEBI" id="CHEBI:29108"/>
    </ligand>
</feature>
<feature type="binding site" evidence="2">
    <location>
        <position position="426"/>
    </location>
    <ligand>
        <name>Ca(2+)</name>
        <dbReference type="ChEBI" id="CHEBI:29108"/>
    </ligand>
</feature>
<feature type="modified residue" description="Phosphoserine" evidence="1">
    <location>
        <position position="200"/>
    </location>
</feature>
<feature type="modified residue" description="Phosphoserine" evidence="1">
    <location>
        <position position="212"/>
    </location>
</feature>
<feature type="sequence conflict" description="In Ref. 1; BAD90467." evidence="5" ref="1">
    <original>I</original>
    <variation>L</variation>
    <location>
        <position position="410"/>
    </location>
</feature>
<feature type="sequence conflict" description="In Ref. 1; BAD90467." evidence="5" ref="1">
    <original>A</original>
    <variation>R</variation>
    <location>
        <position position="445"/>
    </location>
</feature>
<dbReference type="EMBL" id="AK220422">
    <property type="protein sequence ID" value="BAD90467.1"/>
    <property type="status" value="ALT_INIT"/>
    <property type="molecule type" value="mRNA"/>
</dbReference>
<dbReference type="EMBL" id="AK142188">
    <property type="protein sequence ID" value="BAE24969.1"/>
    <property type="status" value="ALT_INIT"/>
    <property type="molecule type" value="mRNA"/>
</dbReference>
<dbReference type="EMBL" id="BC020077">
    <property type="protein sequence ID" value="AAH20077.1"/>
    <property type="molecule type" value="mRNA"/>
</dbReference>
<dbReference type="RefSeq" id="NP_663524.1">
    <property type="nucleotide sequence ID" value="NM_145549.2"/>
</dbReference>
<dbReference type="RefSeq" id="XP_036019896.1">
    <property type="nucleotide sequence ID" value="XM_036164003.1"/>
</dbReference>
<dbReference type="RefSeq" id="XP_036019897.1">
    <property type="nucleotide sequence ID" value="XM_036164004.1"/>
</dbReference>
<dbReference type="RefSeq" id="XP_036019898.1">
    <property type="nucleotide sequence ID" value="XM_036164005.1"/>
</dbReference>
<dbReference type="RefSeq" id="XP_036019899.1">
    <property type="nucleotide sequence ID" value="XM_036164006.1"/>
</dbReference>
<dbReference type="SMR" id="Q8VDY4"/>
<dbReference type="CORUM" id="Q8VDY4"/>
<dbReference type="FunCoup" id="Q8VDY4">
    <property type="interactions" value="348"/>
</dbReference>
<dbReference type="STRING" id="10090.ENSMUSP00000095572"/>
<dbReference type="iPTMnet" id="Q8VDY4"/>
<dbReference type="PhosphoSitePlus" id="Q8VDY4"/>
<dbReference type="ProteomicsDB" id="277728"/>
<dbReference type="Pumba" id="Q8VDY4"/>
<dbReference type="Antibodypedia" id="33354">
    <property type="antibodies" value="109 antibodies from 19 providers"/>
</dbReference>
<dbReference type="Ensembl" id="ENSMUST00000136874.4">
    <property type="protein sequence ID" value="ENSMUSP00000118989.4"/>
    <property type="gene ID" value="ENSMUSG00000073791.14"/>
</dbReference>
<dbReference type="Ensembl" id="ENSMUST00000239516.1">
    <property type="protein sequence ID" value="ENSMUSP00000159398.2"/>
    <property type="gene ID" value="ENSMUSG00000073791.14"/>
</dbReference>
<dbReference type="GeneID" id="230500"/>
<dbReference type="KEGG" id="mmu:230500"/>
<dbReference type="UCSC" id="uc008tuz.1">
    <property type="organism name" value="mouse"/>
</dbReference>
<dbReference type="AGR" id="MGI:2385199"/>
<dbReference type="CTD" id="84455"/>
<dbReference type="MGI" id="MGI:2385199">
    <property type="gene designation" value="Efcab7"/>
</dbReference>
<dbReference type="eggNOG" id="KOG0027">
    <property type="taxonomic scope" value="Eukaryota"/>
</dbReference>
<dbReference type="GeneTree" id="ENSGT00390000015466"/>
<dbReference type="InParanoid" id="Q8VDY4"/>
<dbReference type="OMA" id="KTIDKYW"/>
<dbReference type="OrthoDB" id="26525at2759"/>
<dbReference type="PhylomeDB" id="Q8VDY4"/>
<dbReference type="BioGRID-ORCS" id="230500">
    <property type="hits" value="1 hit in 54 CRISPR screens"/>
</dbReference>
<dbReference type="PRO" id="PR:Q8VDY4"/>
<dbReference type="Proteomes" id="UP000000589">
    <property type="component" value="Chromosome 4"/>
</dbReference>
<dbReference type="RNAct" id="Q8VDY4">
    <property type="molecule type" value="protein"/>
</dbReference>
<dbReference type="Bgee" id="ENSMUSG00000073791">
    <property type="expression patterns" value="Expressed in spermatocyte and 67 other cell types or tissues"/>
</dbReference>
<dbReference type="ExpressionAtlas" id="Q8VDY4">
    <property type="expression patterns" value="baseline and differential"/>
</dbReference>
<dbReference type="GO" id="GO:0060170">
    <property type="term" value="C:ciliary membrane"/>
    <property type="evidence" value="ECO:0000314"/>
    <property type="project" value="UniProtKB"/>
</dbReference>
<dbReference type="GO" id="GO:0009898">
    <property type="term" value="C:cytoplasmic side of plasma membrane"/>
    <property type="evidence" value="ECO:0000314"/>
    <property type="project" value="UniProtKB"/>
</dbReference>
<dbReference type="GO" id="GO:0098797">
    <property type="term" value="C:plasma membrane protein complex"/>
    <property type="evidence" value="ECO:0000314"/>
    <property type="project" value="UniProtKB"/>
</dbReference>
<dbReference type="GO" id="GO:0005509">
    <property type="term" value="F:calcium ion binding"/>
    <property type="evidence" value="ECO:0007669"/>
    <property type="project" value="InterPro"/>
</dbReference>
<dbReference type="GO" id="GO:0042307">
    <property type="term" value="P:positive regulation of protein import into nucleus"/>
    <property type="evidence" value="ECO:0000315"/>
    <property type="project" value="UniProtKB"/>
</dbReference>
<dbReference type="GO" id="GO:1903569">
    <property type="term" value="P:positive regulation of protein localization to ciliary membrane"/>
    <property type="evidence" value="ECO:0000315"/>
    <property type="project" value="UniProtKB"/>
</dbReference>
<dbReference type="GO" id="GO:0045944">
    <property type="term" value="P:positive regulation of transcription by RNA polymerase II"/>
    <property type="evidence" value="ECO:0000315"/>
    <property type="project" value="UniProtKB"/>
</dbReference>
<dbReference type="GO" id="GO:0120229">
    <property type="term" value="P:protein localization to motile cilium"/>
    <property type="evidence" value="ECO:0000315"/>
    <property type="project" value="UniProtKB"/>
</dbReference>
<dbReference type="GO" id="GO:0008589">
    <property type="term" value="P:regulation of smoothened signaling pathway"/>
    <property type="evidence" value="ECO:0000315"/>
    <property type="project" value="UniProtKB"/>
</dbReference>
<dbReference type="CDD" id="cd00051">
    <property type="entry name" value="EFh"/>
    <property type="match status" value="1"/>
</dbReference>
<dbReference type="FunFam" id="1.10.238.10:FF:000193">
    <property type="entry name" value="EF-hand calcium-binding domain-containing protein 7"/>
    <property type="match status" value="1"/>
</dbReference>
<dbReference type="FunFam" id="1.10.238.10:FF:000161">
    <property type="entry name" value="EF-hand calcium-binding domain-containing protein 7 isoform X2"/>
    <property type="match status" value="1"/>
</dbReference>
<dbReference type="Gene3D" id="1.10.238.10">
    <property type="entry name" value="EF-hand"/>
    <property type="match status" value="2"/>
</dbReference>
<dbReference type="InterPro" id="IPR011992">
    <property type="entry name" value="EF-hand-dom_pair"/>
</dbReference>
<dbReference type="InterPro" id="IPR018247">
    <property type="entry name" value="EF_Hand_1_Ca_BS"/>
</dbReference>
<dbReference type="InterPro" id="IPR002048">
    <property type="entry name" value="EF_hand_dom"/>
</dbReference>
<dbReference type="InterPro" id="IPR052266">
    <property type="entry name" value="Miro-EF-hand_domain"/>
</dbReference>
<dbReference type="PANTHER" id="PTHR46819">
    <property type="entry name" value="EF-HAND CALCIUM-BINDING DOMAIN-CONTAINING PROTEIN 7"/>
    <property type="match status" value="1"/>
</dbReference>
<dbReference type="PANTHER" id="PTHR46819:SF1">
    <property type="entry name" value="EF-HAND CALCIUM-BINDING DOMAIN-CONTAINING PROTEIN 7"/>
    <property type="match status" value="1"/>
</dbReference>
<dbReference type="Pfam" id="PF13202">
    <property type="entry name" value="EF-hand_5"/>
    <property type="match status" value="1"/>
</dbReference>
<dbReference type="Pfam" id="PF13499">
    <property type="entry name" value="EF-hand_7"/>
    <property type="match status" value="1"/>
</dbReference>
<dbReference type="SMART" id="SM00054">
    <property type="entry name" value="EFh"/>
    <property type="match status" value="3"/>
</dbReference>
<dbReference type="SUPFAM" id="SSF47473">
    <property type="entry name" value="EF-hand"/>
    <property type="match status" value="2"/>
</dbReference>
<dbReference type="PROSITE" id="PS00018">
    <property type="entry name" value="EF_HAND_1"/>
    <property type="match status" value="1"/>
</dbReference>
<dbReference type="PROSITE" id="PS50222">
    <property type="entry name" value="EF_HAND_2"/>
    <property type="match status" value="3"/>
</dbReference>
<proteinExistence type="evidence at protein level"/>
<gene>
    <name type="primary">Efcab7</name>
    <name type="synonym">Kiaa1799</name>
</gene>
<comment type="function">
    <text evidence="4">Component of the EvC complex that positively regulates ciliary Hedgehog (Hh) signaling (PubMed:24582806). Required for the localization of the EVC2:EVC subcomplex at the base of primary cilia (PubMed:24582806).</text>
</comment>
<comment type="subunit">
    <text evidence="4">Component of the EvC complex composed of EFCAB7, IQCE, EVC2 and EVC; built from two subcomplexes, EVC2:EVC and EFCAB7:IQCE (PubMed:24582806). Interacts (via EF-hand 1 and 2) with IQCE (via N-terminus); this interaction anchors the EVC-EVC2 complex in a signaling microdomain at the base of cilia and stimulates the Hedgehog (Hh) pathway (PubMed:24582806). Interacts with EVC2 (via N-terminal end) (PubMed:24582806). Interacts with EVC (PubMed:24582806).</text>
</comment>
<comment type="subcellular location">
    <subcellularLocation>
        <location evidence="4">Cell projection</location>
        <location evidence="4">Cilium membrane</location>
        <topology evidence="4">Peripheral membrane protein</topology>
        <orientation evidence="4">Cytoplasmic side</orientation>
    </subcellularLocation>
    <text evidence="4">The EvC complex localizes at the base of cilia in the EvC zone of primary cilia in a EFCAB7-dependent manner (PubMed:24582806).</text>
</comment>
<comment type="sequence caution" evidence="5">
    <conflict type="erroneous initiation">
        <sequence resource="EMBL-CDS" id="BAD90467"/>
    </conflict>
</comment>
<comment type="sequence caution" evidence="5">
    <conflict type="erroneous initiation">
        <sequence resource="EMBL-CDS" id="BAE24969"/>
    </conflict>
</comment>
<name>EFCB7_MOUSE</name>
<protein>
    <recommendedName>
        <fullName>EF-hand calcium-binding domain-containing protein 7</fullName>
    </recommendedName>
</protein>
<evidence type="ECO:0000250" key="1">
    <source>
        <dbReference type="UniProtKB" id="A8K855"/>
    </source>
</evidence>
<evidence type="ECO:0000255" key="2">
    <source>
        <dbReference type="PROSITE-ProRule" id="PRU00448"/>
    </source>
</evidence>
<evidence type="ECO:0000256" key="3">
    <source>
        <dbReference type="SAM" id="MobiDB-lite"/>
    </source>
</evidence>
<evidence type="ECO:0000269" key="4">
    <source>
    </source>
</evidence>
<evidence type="ECO:0000305" key="5"/>
<sequence>MASNPGSDAALGTQNPLLSGSPRTKKFPLTEQEVFYMNCRAAYLTIFKSSLENIISKDQLYLALQHAGRNPSQKTINKYWTPQTAKLNFDDFCIILSKEKPTSKAELLKSFKKLDVNDDGAILHSDLQKYLTKRGEKMTQEEVNAVINLADINANGKFDYVKFCKLYMTTSEQCLKTTLERLEADSKLRRQQFGSHMEGSPERGPSPAPKPSPRVIRKNDQETFSSKGDTSHALLSTTRKFKTSVSFTMTMSANSNQDSTLTEPNLKDWQCAQSKGCFFLEEDGEVVSHQYKMHIAQRSVLYLTIKPLYLSQVEGKRCPWLSVDTALYILKKNENPAEPQLMCFTELRNREVFGWTGELEAGIYWLIPSTTGCRLKKETKPVTEEAQLVHRDETGELSLTSEFRSTLSEIFEVIDLDGNGLISLEEYNFFELRTSGEKCDEDAWAVCRENFDTKKNELTRQGFMDLHLMEANDREGDPLDLWVTLHSMGYNKALELTEACPFVINIYAERCKPRIKVVHMEACSGQLEKAICKSVLDRSDAKVMDGYENIIVHTCNYDTWITSIIENKSDNKVIIHINNELSKNCVNNRGLNIFAVEVAPRSTMVCQHVMPLNEQEEWIYCCVYSLVA</sequence>
<accession>Q8VDY4</accession>
<accession>Q3UQS0</accession>
<accession>Q5DTU8</accession>
<reference key="1">
    <citation type="submission" date="2005-02" db="EMBL/GenBank/DDBJ databases">
        <title>Prediction of the coding sequences of mouse homologues of KIAA gene. The complete nucleotide sequences of mouse KIAA-homologous cDNAs identified by screening of terminal sequences of cDNA clones randomly sampled from size-fractionated libraries.</title>
        <authorList>
            <person name="Okazaki N."/>
            <person name="Kikuno R.F."/>
            <person name="Ohara R."/>
            <person name="Inamoto S."/>
            <person name="Nagase T."/>
            <person name="Ohara O."/>
            <person name="Koga H."/>
        </authorList>
    </citation>
    <scope>NUCLEOTIDE SEQUENCE [LARGE SCALE MRNA]</scope>
    <source>
        <tissue>Brain</tissue>
    </source>
</reference>
<reference key="2">
    <citation type="journal article" date="2005" name="Science">
        <title>The transcriptional landscape of the mammalian genome.</title>
        <authorList>
            <person name="Carninci P."/>
            <person name="Kasukawa T."/>
            <person name="Katayama S."/>
            <person name="Gough J."/>
            <person name="Frith M.C."/>
            <person name="Maeda N."/>
            <person name="Oyama R."/>
            <person name="Ravasi T."/>
            <person name="Lenhard B."/>
            <person name="Wells C."/>
            <person name="Kodzius R."/>
            <person name="Shimokawa K."/>
            <person name="Bajic V.B."/>
            <person name="Brenner S.E."/>
            <person name="Batalov S."/>
            <person name="Forrest A.R."/>
            <person name="Zavolan M."/>
            <person name="Davis M.J."/>
            <person name="Wilming L.G."/>
            <person name="Aidinis V."/>
            <person name="Allen J.E."/>
            <person name="Ambesi-Impiombato A."/>
            <person name="Apweiler R."/>
            <person name="Aturaliya R.N."/>
            <person name="Bailey T.L."/>
            <person name="Bansal M."/>
            <person name="Baxter L."/>
            <person name="Beisel K.W."/>
            <person name="Bersano T."/>
            <person name="Bono H."/>
            <person name="Chalk A.M."/>
            <person name="Chiu K.P."/>
            <person name="Choudhary V."/>
            <person name="Christoffels A."/>
            <person name="Clutterbuck D.R."/>
            <person name="Crowe M.L."/>
            <person name="Dalla E."/>
            <person name="Dalrymple B.P."/>
            <person name="de Bono B."/>
            <person name="Della Gatta G."/>
            <person name="di Bernardo D."/>
            <person name="Down T."/>
            <person name="Engstrom P."/>
            <person name="Fagiolini M."/>
            <person name="Faulkner G."/>
            <person name="Fletcher C.F."/>
            <person name="Fukushima T."/>
            <person name="Furuno M."/>
            <person name="Futaki S."/>
            <person name="Gariboldi M."/>
            <person name="Georgii-Hemming P."/>
            <person name="Gingeras T.R."/>
            <person name="Gojobori T."/>
            <person name="Green R.E."/>
            <person name="Gustincich S."/>
            <person name="Harbers M."/>
            <person name="Hayashi Y."/>
            <person name="Hensch T.K."/>
            <person name="Hirokawa N."/>
            <person name="Hill D."/>
            <person name="Huminiecki L."/>
            <person name="Iacono M."/>
            <person name="Ikeo K."/>
            <person name="Iwama A."/>
            <person name="Ishikawa T."/>
            <person name="Jakt M."/>
            <person name="Kanapin A."/>
            <person name="Katoh M."/>
            <person name="Kawasawa Y."/>
            <person name="Kelso J."/>
            <person name="Kitamura H."/>
            <person name="Kitano H."/>
            <person name="Kollias G."/>
            <person name="Krishnan S.P."/>
            <person name="Kruger A."/>
            <person name="Kummerfeld S.K."/>
            <person name="Kurochkin I.V."/>
            <person name="Lareau L.F."/>
            <person name="Lazarevic D."/>
            <person name="Lipovich L."/>
            <person name="Liu J."/>
            <person name="Liuni S."/>
            <person name="McWilliam S."/>
            <person name="Madan Babu M."/>
            <person name="Madera M."/>
            <person name="Marchionni L."/>
            <person name="Matsuda H."/>
            <person name="Matsuzawa S."/>
            <person name="Miki H."/>
            <person name="Mignone F."/>
            <person name="Miyake S."/>
            <person name="Morris K."/>
            <person name="Mottagui-Tabar S."/>
            <person name="Mulder N."/>
            <person name="Nakano N."/>
            <person name="Nakauchi H."/>
            <person name="Ng P."/>
            <person name="Nilsson R."/>
            <person name="Nishiguchi S."/>
            <person name="Nishikawa S."/>
            <person name="Nori F."/>
            <person name="Ohara O."/>
            <person name="Okazaki Y."/>
            <person name="Orlando V."/>
            <person name="Pang K.C."/>
            <person name="Pavan W.J."/>
            <person name="Pavesi G."/>
            <person name="Pesole G."/>
            <person name="Petrovsky N."/>
            <person name="Piazza S."/>
            <person name="Reed J."/>
            <person name="Reid J.F."/>
            <person name="Ring B.Z."/>
            <person name="Ringwald M."/>
            <person name="Rost B."/>
            <person name="Ruan Y."/>
            <person name="Salzberg S.L."/>
            <person name="Sandelin A."/>
            <person name="Schneider C."/>
            <person name="Schoenbach C."/>
            <person name="Sekiguchi K."/>
            <person name="Semple C.A."/>
            <person name="Seno S."/>
            <person name="Sessa L."/>
            <person name="Sheng Y."/>
            <person name="Shibata Y."/>
            <person name="Shimada H."/>
            <person name="Shimada K."/>
            <person name="Silva D."/>
            <person name="Sinclair B."/>
            <person name="Sperling S."/>
            <person name="Stupka E."/>
            <person name="Sugiura K."/>
            <person name="Sultana R."/>
            <person name="Takenaka Y."/>
            <person name="Taki K."/>
            <person name="Tammoja K."/>
            <person name="Tan S.L."/>
            <person name="Tang S."/>
            <person name="Taylor M.S."/>
            <person name="Tegner J."/>
            <person name="Teichmann S.A."/>
            <person name="Ueda H.R."/>
            <person name="van Nimwegen E."/>
            <person name="Verardo R."/>
            <person name="Wei C.L."/>
            <person name="Yagi K."/>
            <person name="Yamanishi H."/>
            <person name="Zabarovsky E."/>
            <person name="Zhu S."/>
            <person name="Zimmer A."/>
            <person name="Hide W."/>
            <person name="Bult C."/>
            <person name="Grimmond S.M."/>
            <person name="Teasdale R.D."/>
            <person name="Liu E.T."/>
            <person name="Brusic V."/>
            <person name="Quackenbush J."/>
            <person name="Wahlestedt C."/>
            <person name="Mattick J.S."/>
            <person name="Hume D.A."/>
            <person name="Kai C."/>
            <person name="Sasaki D."/>
            <person name="Tomaru Y."/>
            <person name="Fukuda S."/>
            <person name="Kanamori-Katayama M."/>
            <person name="Suzuki M."/>
            <person name="Aoki J."/>
            <person name="Arakawa T."/>
            <person name="Iida J."/>
            <person name="Imamura K."/>
            <person name="Itoh M."/>
            <person name="Kato T."/>
            <person name="Kawaji H."/>
            <person name="Kawagashira N."/>
            <person name="Kawashima T."/>
            <person name="Kojima M."/>
            <person name="Kondo S."/>
            <person name="Konno H."/>
            <person name="Nakano K."/>
            <person name="Ninomiya N."/>
            <person name="Nishio T."/>
            <person name="Okada M."/>
            <person name="Plessy C."/>
            <person name="Shibata K."/>
            <person name="Shiraki T."/>
            <person name="Suzuki S."/>
            <person name="Tagami M."/>
            <person name="Waki K."/>
            <person name="Watahiki A."/>
            <person name="Okamura-Oho Y."/>
            <person name="Suzuki H."/>
            <person name="Kawai J."/>
            <person name="Hayashizaki Y."/>
        </authorList>
    </citation>
    <scope>NUCLEOTIDE SEQUENCE [LARGE SCALE MRNA]</scope>
    <source>
        <strain>C57BL/6J</strain>
        <tissue>Heart</tissue>
    </source>
</reference>
<reference key="3">
    <citation type="journal article" date="2004" name="Genome Res.">
        <title>The status, quality, and expansion of the NIH full-length cDNA project: the Mammalian Gene Collection (MGC).</title>
        <authorList>
            <consortium name="The MGC Project Team"/>
        </authorList>
    </citation>
    <scope>NUCLEOTIDE SEQUENCE [LARGE SCALE MRNA]</scope>
    <source>
        <strain>Czech II</strain>
        <tissue>Mammary tumor</tissue>
    </source>
</reference>
<reference key="4">
    <citation type="journal article" date="2014" name="Dev. Cell">
        <title>EFCAB7 and IQCE regulate hedgehog signaling by tethering the EVC-EVC2 complex to the base of primary cilia.</title>
        <authorList>
            <person name="Pusapati G.V."/>
            <person name="Hughes C.E."/>
            <person name="Dorn K.V."/>
            <person name="Zhang D."/>
            <person name="Sugianto P."/>
            <person name="Aravind L."/>
            <person name="Rohatgi R."/>
        </authorList>
    </citation>
    <scope>FUNCTION</scope>
    <scope>IDENTIFICATION IN THE EVC COMPLEX</scope>
    <scope>INTERACTION WITH EVC; EVC2 AND IQCE</scope>
    <scope>SUBCELLULAR LOCATION</scope>
    <scope>IDENTIFICATION BY MASS SPECTROMETRY</scope>
</reference>
<keyword id="KW-0106">Calcium</keyword>
<keyword id="KW-1003">Cell membrane</keyword>
<keyword id="KW-0966">Cell projection</keyword>
<keyword id="KW-0472">Membrane</keyword>
<keyword id="KW-0479">Metal-binding</keyword>
<keyword id="KW-0597">Phosphoprotein</keyword>
<keyword id="KW-1185">Reference proteome</keyword>
<keyword id="KW-0677">Repeat</keyword>
<organism>
    <name type="scientific">Mus musculus</name>
    <name type="common">Mouse</name>
    <dbReference type="NCBI Taxonomy" id="10090"/>
    <lineage>
        <taxon>Eukaryota</taxon>
        <taxon>Metazoa</taxon>
        <taxon>Chordata</taxon>
        <taxon>Craniata</taxon>
        <taxon>Vertebrata</taxon>
        <taxon>Euteleostomi</taxon>
        <taxon>Mammalia</taxon>
        <taxon>Eutheria</taxon>
        <taxon>Euarchontoglires</taxon>
        <taxon>Glires</taxon>
        <taxon>Rodentia</taxon>
        <taxon>Myomorpha</taxon>
        <taxon>Muroidea</taxon>
        <taxon>Muridae</taxon>
        <taxon>Murinae</taxon>
        <taxon>Mus</taxon>
        <taxon>Mus</taxon>
    </lineage>
</organism>